<dbReference type="EC" id="3.5.99.6" evidence="1"/>
<dbReference type="EMBL" id="FM200053">
    <property type="protein sequence ID" value="CAR60117.1"/>
    <property type="molecule type" value="Genomic_DNA"/>
</dbReference>
<dbReference type="RefSeq" id="WP_001237059.1">
    <property type="nucleotide sequence ID" value="NC_011147.1"/>
</dbReference>
<dbReference type="SMR" id="B5BCC5"/>
<dbReference type="KEGG" id="sek:SSPA1918"/>
<dbReference type="HOGENOM" id="CLU_049611_0_1_6"/>
<dbReference type="UniPathway" id="UPA00629">
    <property type="reaction ID" value="UER00684"/>
</dbReference>
<dbReference type="Proteomes" id="UP000001869">
    <property type="component" value="Chromosome"/>
</dbReference>
<dbReference type="GO" id="GO:0005737">
    <property type="term" value="C:cytoplasm"/>
    <property type="evidence" value="ECO:0007669"/>
    <property type="project" value="TreeGrafter"/>
</dbReference>
<dbReference type="GO" id="GO:0004342">
    <property type="term" value="F:glucosamine-6-phosphate deaminase activity"/>
    <property type="evidence" value="ECO:0007669"/>
    <property type="project" value="UniProtKB-UniRule"/>
</dbReference>
<dbReference type="GO" id="GO:0042802">
    <property type="term" value="F:identical protein binding"/>
    <property type="evidence" value="ECO:0007669"/>
    <property type="project" value="TreeGrafter"/>
</dbReference>
<dbReference type="GO" id="GO:0005975">
    <property type="term" value="P:carbohydrate metabolic process"/>
    <property type="evidence" value="ECO:0007669"/>
    <property type="project" value="InterPro"/>
</dbReference>
<dbReference type="GO" id="GO:0006043">
    <property type="term" value="P:glucosamine catabolic process"/>
    <property type="evidence" value="ECO:0007669"/>
    <property type="project" value="TreeGrafter"/>
</dbReference>
<dbReference type="GO" id="GO:0006046">
    <property type="term" value="P:N-acetylglucosamine catabolic process"/>
    <property type="evidence" value="ECO:0007669"/>
    <property type="project" value="TreeGrafter"/>
</dbReference>
<dbReference type="GO" id="GO:0019262">
    <property type="term" value="P:N-acetylneuraminate catabolic process"/>
    <property type="evidence" value="ECO:0007669"/>
    <property type="project" value="UniProtKB-UniRule"/>
</dbReference>
<dbReference type="CDD" id="cd01399">
    <property type="entry name" value="GlcN6P_deaminase"/>
    <property type="match status" value="1"/>
</dbReference>
<dbReference type="FunFam" id="3.40.50.1360:FF:000002">
    <property type="entry name" value="Glucosamine-6-phosphate deaminase"/>
    <property type="match status" value="1"/>
</dbReference>
<dbReference type="Gene3D" id="3.40.50.1360">
    <property type="match status" value="1"/>
</dbReference>
<dbReference type="HAMAP" id="MF_01241">
    <property type="entry name" value="GlcN6P_deamin"/>
    <property type="match status" value="1"/>
</dbReference>
<dbReference type="InterPro" id="IPR006148">
    <property type="entry name" value="Glc/Gal-6P_isomerase"/>
</dbReference>
<dbReference type="InterPro" id="IPR004547">
    <property type="entry name" value="Glucosamine6P_isomerase"/>
</dbReference>
<dbReference type="InterPro" id="IPR018321">
    <property type="entry name" value="Glucosamine6P_isomerase_CS"/>
</dbReference>
<dbReference type="InterPro" id="IPR037171">
    <property type="entry name" value="NagB/RpiA_transferase-like"/>
</dbReference>
<dbReference type="NCBIfam" id="TIGR00502">
    <property type="entry name" value="nagB"/>
    <property type="match status" value="1"/>
</dbReference>
<dbReference type="NCBIfam" id="NF001685">
    <property type="entry name" value="PRK00443.1-5"/>
    <property type="match status" value="1"/>
</dbReference>
<dbReference type="PANTHER" id="PTHR11280">
    <property type="entry name" value="GLUCOSAMINE-6-PHOSPHATE ISOMERASE"/>
    <property type="match status" value="1"/>
</dbReference>
<dbReference type="PANTHER" id="PTHR11280:SF5">
    <property type="entry name" value="GLUCOSAMINE-6-PHOSPHATE ISOMERASE"/>
    <property type="match status" value="1"/>
</dbReference>
<dbReference type="Pfam" id="PF01182">
    <property type="entry name" value="Glucosamine_iso"/>
    <property type="match status" value="1"/>
</dbReference>
<dbReference type="SUPFAM" id="SSF100950">
    <property type="entry name" value="NagB/RpiA/CoA transferase-like"/>
    <property type="match status" value="1"/>
</dbReference>
<dbReference type="PROSITE" id="PS01161">
    <property type="entry name" value="GLC_GALNAC_ISOMERASE"/>
    <property type="match status" value="1"/>
</dbReference>
<proteinExistence type="inferred from homology"/>
<accession>B5BCC5</accession>
<name>NAGB_SALPK</name>
<reference key="1">
    <citation type="journal article" date="2009" name="BMC Genomics">
        <title>Pseudogene accumulation in the evolutionary histories of Salmonella enterica serovars Paratyphi A and Typhi.</title>
        <authorList>
            <person name="Holt K.E."/>
            <person name="Thomson N.R."/>
            <person name="Wain J."/>
            <person name="Langridge G.C."/>
            <person name="Hasan R."/>
            <person name="Bhutta Z.A."/>
            <person name="Quail M.A."/>
            <person name="Norbertczak H."/>
            <person name="Walker D."/>
            <person name="Simmonds M."/>
            <person name="White B."/>
            <person name="Bason N."/>
            <person name="Mungall K."/>
            <person name="Dougan G."/>
            <person name="Parkhill J."/>
        </authorList>
    </citation>
    <scope>NUCLEOTIDE SEQUENCE [LARGE SCALE GENOMIC DNA]</scope>
    <source>
        <strain>AKU_12601</strain>
    </source>
</reference>
<feature type="chain" id="PRO_1000139790" description="Glucosamine-6-phosphate deaminase">
    <location>
        <begin position="1"/>
        <end position="266"/>
    </location>
</feature>
<feature type="active site" description="Proton acceptor; for enolization step" evidence="1">
    <location>
        <position position="72"/>
    </location>
</feature>
<feature type="active site" description="For ring-opening step" evidence="1">
    <location>
        <position position="141"/>
    </location>
</feature>
<feature type="active site" description="Proton acceptor; for ring-opening step" evidence="1">
    <location>
        <position position="143"/>
    </location>
</feature>
<feature type="active site" description="For ring-opening step" evidence="1">
    <location>
        <position position="148"/>
    </location>
</feature>
<feature type="site" description="Part of the allosteric site" evidence="1">
    <location>
        <position position="151"/>
    </location>
</feature>
<feature type="site" description="Part of the allosteric site" evidence="1">
    <location>
        <position position="158"/>
    </location>
</feature>
<feature type="site" description="Part of the allosteric site" evidence="1">
    <location>
        <position position="160"/>
    </location>
</feature>
<feature type="site" description="Part of the allosteric site" evidence="1">
    <location>
        <position position="161"/>
    </location>
</feature>
<feature type="site" description="Part of the allosteric site" evidence="1">
    <location>
        <position position="254"/>
    </location>
</feature>
<comment type="function">
    <text evidence="1">Catalyzes the reversible isomerization-deamination of glucosamine 6-phosphate (GlcN6P) to form fructose 6-phosphate (Fru6P) and ammonium ion.</text>
</comment>
<comment type="catalytic activity">
    <reaction evidence="1">
        <text>alpha-D-glucosamine 6-phosphate + H2O = beta-D-fructose 6-phosphate + NH4(+)</text>
        <dbReference type="Rhea" id="RHEA:12172"/>
        <dbReference type="ChEBI" id="CHEBI:15377"/>
        <dbReference type="ChEBI" id="CHEBI:28938"/>
        <dbReference type="ChEBI" id="CHEBI:57634"/>
        <dbReference type="ChEBI" id="CHEBI:75989"/>
        <dbReference type="EC" id="3.5.99.6"/>
    </reaction>
</comment>
<comment type="activity regulation">
    <text evidence="1">Allosterically activated by N-acetylglucosamine 6-phosphate (GlcNAc6P).</text>
</comment>
<comment type="pathway">
    <text evidence="1">Amino-sugar metabolism; N-acetylneuraminate degradation; D-fructose 6-phosphate from N-acetylneuraminate: step 5/5.</text>
</comment>
<comment type="subunit">
    <text evidence="1">Homohexamer.</text>
</comment>
<comment type="similarity">
    <text evidence="1">Belongs to the glucosamine/galactosamine-6-phosphate isomerase family. NagB subfamily.</text>
</comment>
<evidence type="ECO:0000255" key="1">
    <source>
        <dbReference type="HAMAP-Rule" id="MF_01241"/>
    </source>
</evidence>
<protein>
    <recommendedName>
        <fullName evidence="1">Glucosamine-6-phosphate deaminase</fullName>
        <ecNumber evidence="1">3.5.99.6</ecNumber>
    </recommendedName>
    <alternativeName>
        <fullName evidence="1">GlcN6P deaminase</fullName>
        <shortName evidence="1">GNPDA</shortName>
    </alternativeName>
    <alternativeName>
        <fullName evidence="1">Glucosamine-6-phosphate isomerase</fullName>
    </alternativeName>
</protein>
<sequence>MRLIPLSTAEQVGKWAARHIVNRINAFKPTADRPFVLGLPTGGTPLTAYKALVEMHKAGEVSFKHVVTFNMDEYVGLPKEHPESYHSFMHRNFFDHVDIPAENINLLNGNAPDIDAECRQYEEKIRSYGKIHLFMGGVGNDGHIAFNEPASSLASRTRIKTLTHDTRVANSRFFDGDVNQVPKYALTVGVGTLLDAEEVMILVLGHQKAQALQAAVEGNVNHMWTISCLQLHPKAVVVCDEPSTMELKVKTLKYFNELEAENIKGL</sequence>
<gene>
    <name evidence="1" type="primary">nagB</name>
    <name type="ordered locus">SSPA1918</name>
</gene>
<keyword id="KW-0021">Allosteric enzyme</keyword>
<keyword id="KW-0119">Carbohydrate metabolism</keyword>
<keyword id="KW-0378">Hydrolase</keyword>
<organism>
    <name type="scientific">Salmonella paratyphi A (strain AKU_12601)</name>
    <dbReference type="NCBI Taxonomy" id="554290"/>
    <lineage>
        <taxon>Bacteria</taxon>
        <taxon>Pseudomonadati</taxon>
        <taxon>Pseudomonadota</taxon>
        <taxon>Gammaproteobacteria</taxon>
        <taxon>Enterobacterales</taxon>
        <taxon>Enterobacteriaceae</taxon>
        <taxon>Salmonella</taxon>
    </lineage>
</organism>